<feature type="chain" id="PRO_0000198941" description="GTP-binding protein rho2">
    <location>
        <begin position="1"/>
        <end position="197"/>
    </location>
</feature>
<feature type="propeptide" id="PRO_0000281271" description="Removed in mature form" evidence="1">
    <location>
        <begin position="198"/>
        <end position="200"/>
    </location>
</feature>
<feature type="short sequence motif" description="Effector region" evidence="1">
    <location>
        <begin position="37"/>
        <end position="45"/>
    </location>
</feature>
<feature type="binding site" evidence="1">
    <location>
        <begin position="15"/>
        <end position="22"/>
    </location>
    <ligand>
        <name>GTP</name>
        <dbReference type="ChEBI" id="CHEBI:37565"/>
    </ligand>
</feature>
<feature type="binding site" evidence="1">
    <location>
        <begin position="62"/>
        <end position="66"/>
    </location>
    <ligand>
        <name>GTP</name>
        <dbReference type="ChEBI" id="CHEBI:37565"/>
    </ligand>
</feature>
<feature type="binding site" evidence="1">
    <location>
        <begin position="120"/>
        <end position="123"/>
    </location>
    <ligand>
        <name>GTP</name>
        <dbReference type="ChEBI" id="CHEBI:37565"/>
    </ligand>
</feature>
<feature type="modified residue" description="Cysteine methyl ester" evidence="1">
    <location>
        <position position="197"/>
    </location>
</feature>
<feature type="lipid moiety-binding region" description="S-geranylgeranyl cysteine" evidence="1">
    <location>
        <position position="197"/>
    </location>
</feature>
<gene>
    <name type="primary">rho2</name>
    <name type="ORF">SPAC16.01</name>
</gene>
<dbReference type="EMBL" id="D38181">
    <property type="protein sequence ID" value="BAA07378.1"/>
    <property type="molecule type" value="mRNA"/>
</dbReference>
<dbReference type="EMBL" id="CU329670">
    <property type="protein sequence ID" value="CAB57399.1"/>
    <property type="molecule type" value="Genomic_DNA"/>
</dbReference>
<dbReference type="PIR" id="JC4045">
    <property type="entry name" value="JC4045"/>
</dbReference>
<dbReference type="RefSeq" id="NP_594569.1">
    <property type="nucleotide sequence ID" value="NM_001019998.3"/>
</dbReference>
<dbReference type="SMR" id="Q10133"/>
<dbReference type="BioGRID" id="279222">
    <property type="interactions" value="42"/>
</dbReference>
<dbReference type="FunCoup" id="Q10133">
    <property type="interactions" value="316"/>
</dbReference>
<dbReference type="STRING" id="284812.Q10133"/>
<dbReference type="iPTMnet" id="Q10133"/>
<dbReference type="SwissPalm" id="Q10133"/>
<dbReference type="PaxDb" id="4896-SPAC16.01.1"/>
<dbReference type="EnsemblFungi" id="SPAC16.01.1">
    <property type="protein sequence ID" value="SPAC16.01.1:pep"/>
    <property type="gene ID" value="SPAC16.01"/>
</dbReference>
<dbReference type="GeneID" id="2542773"/>
<dbReference type="KEGG" id="spo:2542773"/>
<dbReference type="PomBase" id="SPAC16.01">
    <property type="gene designation" value="rho2"/>
</dbReference>
<dbReference type="VEuPathDB" id="FungiDB:SPAC16.01"/>
<dbReference type="eggNOG" id="KOG0393">
    <property type="taxonomic scope" value="Eukaryota"/>
</dbReference>
<dbReference type="HOGENOM" id="CLU_041217_21_2_1"/>
<dbReference type="InParanoid" id="Q10133"/>
<dbReference type="OMA" id="NDNVMRR"/>
<dbReference type="PhylomeDB" id="Q10133"/>
<dbReference type="Reactome" id="R-SPO-416482">
    <property type="pathway name" value="G alpha (12/13) signalling events"/>
</dbReference>
<dbReference type="Reactome" id="R-SPO-5625740">
    <property type="pathway name" value="RHO GTPases activate PKNs"/>
</dbReference>
<dbReference type="Reactome" id="R-SPO-6798695">
    <property type="pathway name" value="Neutrophil degranulation"/>
</dbReference>
<dbReference type="Reactome" id="R-SPO-9013026">
    <property type="pathway name" value="RHOB GTPase cycle"/>
</dbReference>
<dbReference type="Reactome" id="R-SPO-9013106">
    <property type="pathway name" value="RHOC GTPase cycle"/>
</dbReference>
<dbReference type="Reactome" id="R-SPO-9013405">
    <property type="pathway name" value="RHOD GTPase cycle"/>
</dbReference>
<dbReference type="Reactome" id="R-SPO-9035034">
    <property type="pathway name" value="RHOF GTPase cycle"/>
</dbReference>
<dbReference type="Reactome" id="R-SPO-9696264">
    <property type="pathway name" value="RND3 GTPase cycle"/>
</dbReference>
<dbReference type="Reactome" id="R-SPO-9696270">
    <property type="pathway name" value="RND2 GTPase cycle"/>
</dbReference>
<dbReference type="Reactome" id="R-SPO-9696273">
    <property type="pathway name" value="RND1 GTPase cycle"/>
</dbReference>
<dbReference type="PRO" id="PR:Q10133"/>
<dbReference type="Proteomes" id="UP000002485">
    <property type="component" value="Chromosome I"/>
</dbReference>
<dbReference type="GO" id="GO:0032153">
    <property type="term" value="C:cell division site"/>
    <property type="evidence" value="ECO:0000314"/>
    <property type="project" value="PomBase"/>
</dbReference>
<dbReference type="GO" id="GO:0005829">
    <property type="term" value="C:cytosol"/>
    <property type="evidence" value="ECO:0007005"/>
    <property type="project" value="PomBase"/>
</dbReference>
<dbReference type="GO" id="GO:0035841">
    <property type="term" value="C:new growing cell tip"/>
    <property type="evidence" value="ECO:0000314"/>
    <property type="project" value="PomBase"/>
</dbReference>
<dbReference type="GO" id="GO:0005634">
    <property type="term" value="C:nucleus"/>
    <property type="evidence" value="ECO:0007005"/>
    <property type="project" value="PomBase"/>
</dbReference>
<dbReference type="GO" id="GO:0035840">
    <property type="term" value="C:old growing cell tip"/>
    <property type="evidence" value="ECO:0000314"/>
    <property type="project" value="PomBase"/>
</dbReference>
<dbReference type="GO" id="GO:0005886">
    <property type="term" value="C:plasma membrane"/>
    <property type="evidence" value="ECO:0000318"/>
    <property type="project" value="GO_Central"/>
</dbReference>
<dbReference type="GO" id="GO:0005525">
    <property type="term" value="F:GTP binding"/>
    <property type="evidence" value="ECO:0000318"/>
    <property type="project" value="GO_Central"/>
</dbReference>
<dbReference type="GO" id="GO:0003924">
    <property type="term" value="F:GTPase activity"/>
    <property type="evidence" value="ECO:0000314"/>
    <property type="project" value="PomBase"/>
</dbReference>
<dbReference type="GO" id="GO:0019901">
    <property type="term" value="F:protein kinase binding"/>
    <property type="evidence" value="ECO:0000318"/>
    <property type="project" value="GO_Central"/>
</dbReference>
<dbReference type="GO" id="GO:0043539">
    <property type="term" value="F:protein serine/threonine kinase activator activity"/>
    <property type="evidence" value="ECO:0000269"/>
    <property type="project" value="PomBase"/>
</dbReference>
<dbReference type="GO" id="GO:0007015">
    <property type="term" value="P:actin filament organization"/>
    <property type="evidence" value="ECO:0000318"/>
    <property type="project" value="GO_Central"/>
</dbReference>
<dbReference type="GO" id="GO:0030950">
    <property type="term" value="P:establishment or maintenance of actin cytoskeleton polarity"/>
    <property type="evidence" value="ECO:0000315"/>
    <property type="project" value="PomBase"/>
</dbReference>
<dbReference type="GO" id="GO:1902660">
    <property type="term" value="P:negative regulation of glucose mediated signaling pathway"/>
    <property type="evidence" value="ECO:0000315"/>
    <property type="project" value="PomBase"/>
</dbReference>
<dbReference type="GO" id="GO:1903139">
    <property type="term" value="P:positive regulation of cell integrity MAPK cascade"/>
    <property type="evidence" value="ECO:0000315"/>
    <property type="project" value="PomBase"/>
</dbReference>
<dbReference type="GO" id="GO:0032956">
    <property type="term" value="P:regulation of actin cytoskeleton organization"/>
    <property type="evidence" value="ECO:0000318"/>
    <property type="project" value="GO_Central"/>
</dbReference>
<dbReference type="GO" id="GO:0070610">
    <property type="term" value="P:regulation of fungal-type cell wall (1-&gt;3)-alpha-glucan biosynthetic process"/>
    <property type="evidence" value="ECO:0000316"/>
    <property type="project" value="PomBase"/>
</dbReference>
<dbReference type="GO" id="GO:0007165">
    <property type="term" value="P:signal transduction"/>
    <property type="evidence" value="ECO:0000318"/>
    <property type="project" value="GO_Central"/>
</dbReference>
<dbReference type="GO" id="GO:0007264">
    <property type="term" value="P:small GTPase-mediated signal transduction"/>
    <property type="evidence" value="ECO:0007669"/>
    <property type="project" value="InterPro"/>
</dbReference>
<dbReference type="CDD" id="cd04129">
    <property type="entry name" value="Rho2"/>
    <property type="match status" value="1"/>
</dbReference>
<dbReference type="FunFam" id="3.40.50.300:FF:000573">
    <property type="entry name" value="RHO family GTPase Rho2"/>
    <property type="match status" value="1"/>
</dbReference>
<dbReference type="Gene3D" id="3.40.50.300">
    <property type="entry name" value="P-loop containing nucleotide triphosphate hydrolases"/>
    <property type="match status" value="1"/>
</dbReference>
<dbReference type="InterPro" id="IPR027417">
    <property type="entry name" value="P-loop_NTPase"/>
</dbReference>
<dbReference type="InterPro" id="IPR005225">
    <property type="entry name" value="Small_GTP-bd"/>
</dbReference>
<dbReference type="InterPro" id="IPR001806">
    <property type="entry name" value="Small_GTPase"/>
</dbReference>
<dbReference type="InterPro" id="IPR003578">
    <property type="entry name" value="Small_GTPase_Rho"/>
</dbReference>
<dbReference type="NCBIfam" id="TIGR00231">
    <property type="entry name" value="small_GTP"/>
    <property type="match status" value="1"/>
</dbReference>
<dbReference type="PANTHER" id="PTHR24072">
    <property type="entry name" value="RHO FAMILY GTPASE"/>
    <property type="match status" value="1"/>
</dbReference>
<dbReference type="Pfam" id="PF00071">
    <property type="entry name" value="Ras"/>
    <property type="match status" value="1"/>
</dbReference>
<dbReference type="PRINTS" id="PR00449">
    <property type="entry name" value="RASTRNSFRMNG"/>
</dbReference>
<dbReference type="SMART" id="SM00175">
    <property type="entry name" value="RAB"/>
    <property type="match status" value="1"/>
</dbReference>
<dbReference type="SMART" id="SM00176">
    <property type="entry name" value="RAN"/>
    <property type="match status" value="1"/>
</dbReference>
<dbReference type="SMART" id="SM00173">
    <property type="entry name" value="RAS"/>
    <property type="match status" value="1"/>
</dbReference>
<dbReference type="SMART" id="SM00174">
    <property type="entry name" value="RHO"/>
    <property type="match status" value="1"/>
</dbReference>
<dbReference type="SUPFAM" id="SSF52540">
    <property type="entry name" value="P-loop containing nucleoside triphosphate hydrolases"/>
    <property type="match status" value="1"/>
</dbReference>
<dbReference type="PROSITE" id="PS51420">
    <property type="entry name" value="RHO"/>
    <property type="match status" value="1"/>
</dbReference>
<accession>Q10133</accession>
<keyword id="KW-1003">Cell membrane</keyword>
<keyword id="KW-0342">GTP-binding</keyword>
<keyword id="KW-0449">Lipoprotein</keyword>
<keyword id="KW-0472">Membrane</keyword>
<keyword id="KW-0488">Methylation</keyword>
<keyword id="KW-0547">Nucleotide-binding</keyword>
<keyword id="KW-0636">Prenylation</keyword>
<keyword id="KW-1185">Reference proteome</keyword>
<organism>
    <name type="scientific">Schizosaccharomyces pombe (strain 972 / ATCC 24843)</name>
    <name type="common">Fission yeast</name>
    <dbReference type="NCBI Taxonomy" id="284812"/>
    <lineage>
        <taxon>Eukaryota</taxon>
        <taxon>Fungi</taxon>
        <taxon>Dikarya</taxon>
        <taxon>Ascomycota</taxon>
        <taxon>Taphrinomycotina</taxon>
        <taxon>Schizosaccharomycetes</taxon>
        <taxon>Schizosaccharomycetales</taxon>
        <taxon>Schizosaccharomycetaceae</taxon>
        <taxon>Schizosaccharomyces</taxon>
    </lineage>
</organism>
<proteinExistence type="evidence at protein level"/>
<comment type="function">
    <text evidence="2 3">Involved in cell morphogenesis, the maintenance of growth direction, control of polarity and of cell wall integrity. Regulates the synthesis of alpha-D-glucan through activation of pck2.</text>
</comment>
<comment type="subunit">
    <text evidence="2">Interacts with pck2.</text>
</comment>
<comment type="subcellular location">
    <subcellularLocation>
        <location evidence="3">Cell membrane</location>
        <topology evidence="3">Lipid-anchor</topology>
    </subcellularLocation>
    <text>Found at the growing tips of interphase cells and at the septum prior to cytokinesis.</text>
</comment>
<comment type="similarity">
    <text evidence="4">Belongs to the small GTPase superfamily. Rho family.</text>
</comment>
<reference key="1">
    <citation type="journal article" date="1995" name="Gene">
        <title>Isolation and sequencing of two cDNA clones encoding Rho proteins from the fission yeast Schizosaccharomyces pombe.</title>
        <authorList>
            <person name="Nakano K."/>
            <person name="Mabuchi I."/>
        </authorList>
    </citation>
    <scope>NUCLEOTIDE SEQUENCE [MRNA]</scope>
    <source>
        <strain>JY450</strain>
    </source>
</reference>
<reference key="2">
    <citation type="journal article" date="2002" name="Nature">
        <title>The genome sequence of Schizosaccharomyces pombe.</title>
        <authorList>
            <person name="Wood V."/>
            <person name="Gwilliam R."/>
            <person name="Rajandream M.A."/>
            <person name="Lyne M.H."/>
            <person name="Lyne R."/>
            <person name="Stewart A."/>
            <person name="Sgouros J.G."/>
            <person name="Peat N."/>
            <person name="Hayles J."/>
            <person name="Baker S.G."/>
            <person name="Basham D."/>
            <person name="Bowman S."/>
            <person name="Brooks K."/>
            <person name="Brown D."/>
            <person name="Brown S."/>
            <person name="Chillingworth T."/>
            <person name="Churcher C.M."/>
            <person name="Collins M."/>
            <person name="Connor R."/>
            <person name="Cronin A."/>
            <person name="Davis P."/>
            <person name="Feltwell T."/>
            <person name="Fraser A."/>
            <person name="Gentles S."/>
            <person name="Goble A."/>
            <person name="Hamlin N."/>
            <person name="Harris D.E."/>
            <person name="Hidalgo J."/>
            <person name="Hodgson G."/>
            <person name="Holroyd S."/>
            <person name="Hornsby T."/>
            <person name="Howarth S."/>
            <person name="Huckle E.J."/>
            <person name="Hunt S."/>
            <person name="Jagels K."/>
            <person name="James K.D."/>
            <person name="Jones L."/>
            <person name="Jones M."/>
            <person name="Leather S."/>
            <person name="McDonald S."/>
            <person name="McLean J."/>
            <person name="Mooney P."/>
            <person name="Moule S."/>
            <person name="Mungall K.L."/>
            <person name="Murphy L.D."/>
            <person name="Niblett D."/>
            <person name="Odell C."/>
            <person name="Oliver K."/>
            <person name="O'Neil S."/>
            <person name="Pearson D."/>
            <person name="Quail M.A."/>
            <person name="Rabbinowitsch E."/>
            <person name="Rutherford K.M."/>
            <person name="Rutter S."/>
            <person name="Saunders D."/>
            <person name="Seeger K."/>
            <person name="Sharp S."/>
            <person name="Skelton J."/>
            <person name="Simmonds M.N."/>
            <person name="Squares R."/>
            <person name="Squares S."/>
            <person name="Stevens K."/>
            <person name="Taylor K."/>
            <person name="Taylor R.G."/>
            <person name="Tivey A."/>
            <person name="Walsh S.V."/>
            <person name="Warren T."/>
            <person name="Whitehead S."/>
            <person name="Woodward J.R."/>
            <person name="Volckaert G."/>
            <person name="Aert R."/>
            <person name="Robben J."/>
            <person name="Grymonprez B."/>
            <person name="Weltjens I."/>
            <person name="Vanstreels E."/>
            <person name="Rieger M."/>
            <person name="Schaefer M."/>
            <person name="Mueller-Auer S."/>
            <person name="Gabel C."/>
            <person name="Fuchs M."/>
            <person name="Duesterhoeft A."/>
            <person name="Fritzc C."/>
            <person name="Holzer E."/>
            <person name="Moestl D."/>
            <person name="Hilbert H."/>
            <person name="Borzym K."/>
            <person name="Langer I."/>
            <person name="Beck A."/>
            <person name="Lehrach H."/>
            <person name="Reinhardt R."/>
            <person name="Pohl T.M."/>
            <person name="Eger P."/>
            <person name="Zimmermann W."/>
            <person name="Wedler H."/>
            <person name="Wambutt R."/>
            <person name="Purnelle B."/>
            <person name="Goffeau A."/>
            <person name="Cadieu E."/>
            <person name="Dreano S."/>
            <person name="Gloux S."/>
            <person name="Lelaure V."/>
            <person name="Mottier S."/>
            <person name="Galibert F."/>
            <person name="Aves S.J."/>
            <person name="Xiang Z."/>
            <person name="Hunt C."/>
            <person name="Moore K."/>
            <person name="Hurst S.M."/>
            <person name="Lucas M."/>
            <person name="Rochet M."/>
            <person name="Gaillardin C."/>
            <person name="Tallada V.A."/>
            <person name="Garzon A."/>
            <person name="Thode G."/>
            <person name="Daga R.R."/>
            <person name="Cruzado L."/>
            <person name="Jimenez J."/>
            <person name="Sanchez M."/>
            <person name="del Rey F."/>
            <person name="Benito J."/>
            <person name="Dominguez A."/>
            <person name="Revuelta J.L."/>
            <person name="Moreno S."/>
            <person name="Armstrong J."/>
            <person name="Forsburg S.L."/>
            <person name="Cerutti L."/>
            <person name="Lowe T."/>
            <person name="McCombie W.R."/>
            <person name="Paulsen I."/>
            <person name="Potashkin J."/>
            <person name="Shpakovski G.V."/>
            <person name="Ussery D."/>
            <person name="Barrell B.G."/>
            <person name="Nurse P."/>
        </authorList>
    </citation>
    <scope>NUCLEOTIDE SEQUENCE [LARGE SCALE GENOMIC DNA]</scope>
    <source>
        <strain>972 / ATCC 24843</strain>
    </source>
</reference>
<reference key="3">
    <citation type="journal article" date="1998" name="J. Cell Sci.">
        <title>Genes that cause aberrant cell morphology by overexpression in fission yeast: a role of a small GTP-binding protein Rho2 in cell morphogenesis.</title>
        <authorList>
            <person name="Hirata D."/>
            <person name="Nakano K."/>
            <person name="Fukui M."/>
            <person name="Takenaka H."/>
            <person name="Miyakawa T."/>
            <person name="Mabuchi I."/>
        </authorList>
    </citation>
    <scope>FUNCTION</scope>
    <scope>SUBCELLULAR LOCATION</scope>
</reference>
<reference key="4">
    <citation type="journal article" date="2000" name="Mol. Biol. Cell">
        <title>Schizosaccharomyces pombe rho2p GTPase regulates cell wall alpha-glucan biosynthesis through the protein kinase pck2p.</title>
        <authorList>
            <person name="Calonge T.M."/>
            <person name="Nakano K."/>
            <person name="Arellano M."/>
            <person name="Arai R."/>
            <person name="Katayama S."/>
            <person name="Toda T."/>
            <person name="Mabuchi I."/>
            <person name="Perez P."/>
        </authorList>
    </citation>
    <scope>FUNCTION</scope>
    <scope>INTERACTION WITH PCK2</scope>
</reference>
<sequence>MLQSQPIRRKLVVVGDGACGKTSLLSVFTLGYFPTEYVPTVFENYVSDCRVDGKSVQLALWDTAGQEEYERLRPMSYAKAHIILVGFAIDSPDSLENVSTKWIEEINTLCPNVPFILVGMKADLRSDPVAIEEMRRRNQNFVKSQQAELVAQRIGARKYMECSSLTGDGVDDVFEAATRAALTVRDSENDKSSTKCCIIS</sequence>
<protein>
    <recommendedName>
        <fullName>GTP-binding protein rho2</fullName>
    </recommendedName>
</protein>
<evidence type="ECO:0000250" key="1"/>
<evidence type="ECO:0000269" key="2">
    <source>
    </source>
</evidence>
<evidence type="ECO:0000269" key="3">
    <source>
    </source>
</evidence>
<evidence type="ECO:0000305" key="4"/>
<name>RHO2_SCHPO</name>